<sequence length="348" mass="37721">MNPYVLMILMSSLGLGTTLTFSSSHWILAWMGLEINTLAIVPLMAQQHHPRAVEATTKYFLIQAAAAAMILFTSTTNAWISGQWDVTGMPGPATSTAMMFALALKIGLAPMHFWLPEVLQGLDLLTGLILSTWQKLAPMALIIQTTQTTDPLILTSLGIASSLIGGWSGLNQTQLRKILAYSSIAHMGWMIIVIQYAPQLTLIALGTYIFMTSAAFLTLKVLSATKINTLTTTWPKSPILAAIATLVMLSLGGLPPLTGFMPKWLILQELTKQDLPATATIMALTALLSLFFYLRLCHAMTLTTSPNTINSAPHWRVQTTQNSLPLTISVTVTMGLLPLTPAILMLTT</sequence>
<evidence type="ECO:0000250" key="1">
    <source>
        <dbReference type="UniProtKB" id="P03891"/>
    </source>
</evidence>
<evidence type="ECO:0000250" key="2">
    <source>
        <dbReference type="UniProtKB" id="P03892"/>
    </source>
</evidence>
<evidence type="ECO:0000255" key="3"/>
<evidence type="ECO:0000305" key="4"/>
<evidence type="ECO:0000312" key="5">
    <source>
        <dbReference type="Proteomes" id="UP000000437"/>
    </source>
</evidence>
<gene>
    <name type="primary">mt-nd2</name>
    <name type="synonym">mtnd2</name>
    <name type="synonym">nd2</name>
</gene>
<geneLocation type="mitochondrion"/>
<reference key="1">
    <citation type="journal article" date="2001" name="Genome Res.">
        <title>The complete sequence of the zebrafish (Danio rerio) mitochondrial genome and evolutionary patterns in vertebrate mitochondrial DNA.</title>
        <authorList>
            <person name="Broughton R.E."/>
            <person name="Milam J.E."/>
            <person name="Roe B.A."/>
        </authorList>
    </citation>
    <scope>NUCLEOTIDE SEQUENCE [LARGE SCALE GENOMIC DNA]</scope>
    <source>
        <strain evidence="5">Tuebingen</strain>
    </source>
</reference>
<keyword id="KW-0249">Electron transport</keyword>
<keyword id="KW-0472">Membrane</keyword>
<keyword id="KW-0496">Mitochondrion</keyword>
<keyword id="KW-0999">Mitochondrion inner membrane</keyword>
<keyword id="KW-0520">NAD</keyword>
<keyword id="KW-1185">Reference proteome</keyword>
<keyword id="KW-0679">Respiratory chain</keyword>
<keyword id="KW-1278">Translocase</keyword>
<keyword id="KW-0812">Transmembrane</keyword>
<keyword id="KW-1133">Transmembrane helix</keyword>
<keyword id="KW-0813">Transport</keyword>
<keyword id="KW-0830">Ubiquinone</keyword>
<name>NU2M_DANRE</name>
<feature type="chain" id="PRO_0000117562" description="NADH-ubiquinone oxidoreductase chain 2">
    <location>
        <begin position="1"/>
        <end position="348"/>
    </location>
</feature>
<feature type="transmembrane region" description="Helical" evidence="3">
    <location>
        <begin position="1"/>
        <end position="21"/>
    </location>
</feature>
<feature type="transmembrane region" description="Helical" evidence="3">
    <location>
        <begin position="25"/>
        <end position="45"/>
    </location>
</feature>
<feature type="transmembrane region" description="Helical" evidence="3">
    <location>
        <begin position="60"/>
        <end position="80"/>
    </location>
</feature>
<feature type="transmembrane region" description="Helical" evidence="3">
    <location>
        <begin position="99"/>
        <end position="119"/>
    </location>
</feature>
<feature type="transmembrane region" description="Helical" evidence="3">
    <location>
        <begin position="124"/>
        <end position="144"/>
    </location>
</feature>
<feature type="transmembrane region" description="Helical" evidence="3">
    <location>
        <begin position="151"/>
        <end position="171"/>
    </location>
</feature>
<feature type="transmembrane region" description="Helical" evidence="3">
    <location>
        <begin position="178"/>
        <end position="197"/>
    </location>
</feature>
<feature type="transmembrane region" description="Helical" evidence="3">
    <location>
        <begin position="202"/>
        <end position="224"/>
    </location>
</feature>
<feature type="transmembrane region" description="Helical" evidence="3">
    <location>
        <begin position="239"/>
        <end position="259"/>
    </location>
</feature>
<feature type="transmembrane region" description="Helical" evidence="3">
    <location>
        <begin position="274"/>
        <end position="294"/>
    </location>
</feature>
<feature type="transmembrane region" description="Helical" evidence="3">
    <location>
        <begin position="326"/>
        <end position="346"/>
    </location>
</feature>
<comment type="function">
    <text evidence="1">Core subunit of the mitochondrial membrane respiratory chain NADH dehydrogenase (Complex I) which catalyzes electron transfer from NADH through the respiratory chain, using ubiquinone as an electron acceptor. Essential for the catalytic activity and assembly of complex I.</text>
</comment>
<comment type="catalytic activity">
    <reaction evidence="1">
        <text>a ubiquinone + NADH + 5 H(+)(in) = a ubiquinol + NAD(+) + 4 H(+)(out)</text>
        <dbReference type="Rhea" id="RHEA:29091"/>
        <dbReference type="Rhea" id="RHEA-COMP:9565"/>
        <dbReference type="Rhea" id="RHEA-COMP:9566"/>
        <dbReference type="ChEBI" id="CHEBI:15378"/>
        <dbReference type="ChEBI" id="CHEBI:16389"/>
        <dbReference type="ChEBI" id="CHEBI:17976"/>
        <dbReference type="ChEBI" id="CHEBI:57540"/>
        <dbReference type="ChEBI" id="CHEBI:57945"/>
        <dbReference type="EC" id="7.1.1.2"/>
    </reaction>
</comment>
<comment type="subunit">
    <text evidence="2">Core subunit of respiratory chain NADH dehydrogenase (Complex I) which is composed of 45 different subunits.</text>
</comment>
<comment type="subcellular location">
    <subcellularLocation>
        <location evidence="2">Mitochondrion inner membrane</location>
        <topology evidence="3">Multi-pass membrane protein</topology>
    </subcellularLocation>
</comment>
<comment type="similarity">
    <text evidence="4">Belongs to the complex I subunit 2 family.</text>
</comment>
<proteinExistence type="inferred from homology"/>
<dbReference type="EC" id="7.1.1.2" evidence="1"/>
<dbReference type="EMBL" id="AC024175">
    <property type="protein sequence ID" value="AAF74298.1"/>
    <property type="molecule type" value="Genomic_DNA"/>
</dbReference>
<dbReference type="RefSeq" id="NP_059332.1">
    <property type="nucleotide sequence ID" value="NC_002333.2"/>
</dbReference>
<dbReference type="SMR" id="Q9MIY9"/>
<dbReference type="FunCoup" id="Q9MIY9">
    <property type="interactions" value="18"/>
</dbReference>
<dbReference type="STRING" id="7955.ENSDARP00000087870"/>
<dbReference type="PaxDb" id="7955-ENSDARP00000087870"/>
<dbReference type="Ensembl" id="ENSDART00000093600">
    <property type="protein sequence ID" value="ENSDARP00000087870"/>
    <property type="gene ID" value="ENSDARG00000063899"/>
</dbReference>
<dbReference type="GeneID" id="140532"/>
<dbReference type="KEGG" id="dre:140532"/>
<dbReference type="AGR" id="ZFIN:ZDB-GENE-011205-8"/>
<dbReference type="CTD" id="4536"/>
<dbReference type="ZFIN" id="ZDB-GENE-011205-8">
    <property type="gene designation" value="mt-nd2"/>
</dbReference>
<dbReference type="eggNOG" id="KOG4668">
    <property type="taxonomic scope" value="Eukaryota"/>
</dbReference>
<dbReference type="HOGENOM" id="CLU_007100_1_3_1"/>
<dbReference type="InParanoid" id="Q9MIY9"/>
<dbReference type="OMA" id="HFWVPEV"/>
<dbReference type="OrthoDB" id="4092844at2759"/>
<dbReference type="PhylomeDB" id="Q9MIY9"/>
<dbReference type="TreeFam" id="TF343996"/>
<dbReference type="Reactome" id="R-DRE-611105">
    <property type="pathway name" value="Respiratory electron transport"/>
</dbReference>
<dbReference type="PRO" id="PR:Q9MIY9"/>
<dbReference type="Proteomes" id="UP000000437">
    <property type="component" value="Mitochondrion MT"/>
</dbReference>
<dbReference type="Bgee" id="ENSDARG00000063899">
    <property type="expression patterns" value="Expressed in early embryo and 36 other cell types or tissues"/>
</dbReference>
<dbReference type="ExpressionAtlas" id="Q9MIY9">
    <property type="expression patterns" value="baseline"/>
</dbReference>
<dbReference type="GO" id="GO:0005743">
    <property type="term" value="C:mitochondrial inner membrane"/>
    <property type="evidence" value="ECO:0000250"/>
    <property type="project" value="UniProtKB"/>
</dbReference>
<dbReference type="GO" id="GO:0045271">
    <property type="term" value="C:respiratory chain complex I"/>
    <property type="evidence" value="ECO:0000318"/>
    <property type="project" value="GO_Central"/>
</dbReference>
<dbReference type="GO" id="GO:0008137">
    <property type="term" value="F:NADH dehydrogenase (ubiquinone) activity"/>
    <property type="evidence" value="ECO:0000250"/>
    <property type="project" value="UniProtKB"/>
</dbReference>
<dbReference type="GO" id="GO:0006120">
    <property type="term" value="P:mitochondrial electron transport, NADH to ubiquinone"/>
    <property type="evidence" value="ECO:0000250"/>
    <property type="project" value="UniProtKB"/>
</dbReference>
<dbReference type="GO" id="GO:0032981">
    <property type="term" value="P:mitochondrial respiratory chain complex I assembly"/>
    <property type="evidence" value="ECO:0000250"/>
    <property type="project" value="UniProtKB"/>
</dbReference>
<dbReference type="InterPro" id="IPR050175">
    <property type="entry name" value="Complex_I_Subunit_2"/>
</dbReference>
<dbReference type="InterPro" id="IPR010933">
    <property type="entry name" value="NADH_DH_su2_C"/>
</dbReference>
<dbReference type="InterPro" id="IPR003917">
    <property type="entry name" value="NADH_UbQ_OxRdtase_chain2"/>
</dbReference>
<dbReference type="InterPro" id="IPR001750">
    <property type="entry name" value="ND/Mrp_TM"/>
</dbReference>
<dbReference type="PANTHER" id="PTHR46552">
    <property type="entry name" value="NADH-UBIQUINONE OXIDOREDUCTASE CHAIN 2"/>
    <property type="match status" value="1"/>
</dbReference>
<dbReference type="PANTHER" id="PTHR46552:SF1">
    <property type="entry name" value="NADH-UBIQUINONE OXIDOREDUCTASE CHAIN 2"/>
    <property type="match status" value="1"/>
</dbReference>
<dbReference type="Pfam" id="PF06444">
    <property type="entry name" value="NADH_dehy_S2_C"/>
    <property type="match status" value="1"/>
</dbReference>
<dbReference type="Pfam" id="PF00361">
    <property type="entry name" value="Proton_antipo_M"/>
    <property type="match status" value="1"/>
</dbReference>
<dbReference type="PRINTS" id="PR01436">
    <property type="entry name" value="NADHDHGNASE2"/>
</dbReference>
<organism>
    <name type="scientific">Danio rerio</name>
    <name type="common">Zebrafish</name>
    <name type="synonym">Brachydanio rerio</name>
    <dbReference type="NCBI Taxonomy" id="7955"/>
    <lineage>
        <taxon>Eukaryota</taxon>
        <taxon>Metazoa</taxon>
        <taxon>Chordata</taxon>
        <taxon>Craniata</taxon>
        <taxon>Vertebrata</taxon>
        <taxon>Euteleostomi</taxon>
        <taxon>Actinopterygii</taxon>
        <taxon>Neopterygii</taxon>
        <taxon>Teleostei</taxon>
        <taxon>Ostariophysi</taxon>
        <taxon>Cypriniformes</taxon>
        <taxon>Danionidae</taxon>
        <taxon>Danioninae</taxon>
        <taxon>Danio</taxon>
    </lineage>
</organism>
<accession>Q9MIY9</accession>
<protein>
    <recommendedName>
        <fullName>NADH-ubiquinone oxidoreductase chain 2</fullName>
        <ecNumber evidence="1">7.1.1.2</ecNumber>
    </recommendedName>
    <alternativeName>
        <fullName>NADH dehydrogenase subunit 2</fullName>
    </alternativeName>
</protein>